<keyword id="KW-0002">3D-structure</keyword>
<keyword id="KW-0012">Acyltransferase</keyword>
<keyword id="KW-0963">Cytoplasm</keyword>
<keyword id="KW-0275">Fatty acid biosynthesis</keyword>
<keyword id="KW-0276">Fatty acid metabolism</keyword>
<keyword id="KW-0444">Lipid biosynthesis</keyword>
<keyword id="KW-0443">Lipid metabolism</keyword>
<keyword id="KW-0511">Multifunctional enzyme</keyword>
<keyword id="KW-1185">Reference proteome</keyword>
<keyword id="KW-0808">Transferase</keyword>
<evidence type="ECO:0000255" key="1">
    <source>
        <dbReference type="HAMAP-Rule" id="MF_01815"/>
    </source>
</evidence>
<evidence type="ECO:0000269" key="2">
    <source>
    </source>
</evidence>
<evidence type="ECO:0000303" key="3">
    <source>
    </source>
</evidence>
<evidence type="ECO:0000305" key="4"/>
<evidence type="ECO:0007829" key="5">
    <source>
        <dbReference type="PDB" id="3IL3"/>
    </source>
</evidence>
<protein>
    <recommendedName>
        <fullName evidence="1 3">Beta-ketoacyl-[acyl-carrier-protein] synthase III</fullName>
        <shortName evidence="1">Beta-ketoacyl-ACP synthase III</shortName>
        <shortName evidence="1">KAS III</shortName>
        <ecNumber evidence="1">2.3.1.180</ecNumber>
    </recommendedName>
    <alternativeName>
        <fullName evidence="1">3-oxoacyl-[acyl-carrier-protein] synthase 3</fullName>
    </alternativeName>
    <alternativeName>
        <fullName evidence="1">3-oxoacyl-[acyl-carrier-protein] synthase III</fullName>
    </alternativeName>
</protein>
<reference key="1">
    <citation type="journal article" date="1995" name="Science">
        <title>Whole-genome random sequencing and assembly of Haemophilus influenzae Rd.</title>
        <authorList>
            <person name="Fleischmann R.D."/>
            <person name="Adams M.D."/>
            <person name="White O."/>
            <person name="Clayton R.A."/>
            <person name="Kirkness E.F."/>
            <person name="Kerlavage A.R."/>
            <person name="Bult C.J."/>
            <person name="Tomb J.-F."/>
            <person name="Dougherty B.A."/>
            <person name="Merrick J.M."/>
            <person name="McKenney K."/>
            <person name="Sutton G.G."/>
            <person name="FitzHugh W."/>
            <person name="Fields C.A."/>
            <person name="Gocayne J.D."/>
            <person name="Scott J.D."/>
            <person name="Shirley R."/>
            <person name="Liu L.-I."/>
            <person name="Glodek A."/>
            <person name="Kelley J.M."/>
            <person name="Weidman J.F."/>
            <person name="Phillips C.A."/>
            <person name="Spriggs T."/>
            <person name="Hedblom E."/>
            <person name="Cotton M.D."/>
            <person name="Utterback T.R."/>
            <person name="Hanna M.C."/>
            <person name="Nguyen D.T."/>
            <person name="Saudek D.M."/>
            <person name="Brandon R.C."/>
            <person name="Fine L.D."/>
            <person name="Fritchman J.L."/>
            <person name="Fuhrmann J.L."/>
            <person name="Geoghagen N.S.M."/>
            <person name="Gnehm C.L."/>
            <person name="McDonald L.A."/>
            <person name="Small K.V."/>
            <person name="Fraser C.M."/>
            <person name="Smith H.O."/>
            <person name="Venter J.C."/>
        </authorList>
    </citation>
    <scope>NUCLEOTIDE SEQUENCE [LARGE SCALE GENOMIC DNA]</scope>
    <source>
        <strain>ATCC 51907 / DSM 11121 / KW20 / Rd</strain>
    </source>
</reference>
<reference key="2">
    <citation type="journal article" date="2001" name="J. Biol. Chem.">
        <title>Identification, substrate specificity, and inhibition of the Streptococcus pneumoniae beta-ketoacyl-acyl carrier protein synthase III (FabH).</title>
        <authorList>
            <person name="Khandekar S.S."/>
            <person name="Gentry D.R."/>
            <person name="Van Aller G.S."/>
            <person name="Warren P."/>
            <person name="Xiang H."/>
            <person name="Silverman C."/>
            <person name="Doyle M.L."/>
            <person name="Chambers P.A."/>
            <person name="Konstantinidis A.K."/>
            <person name="Brandt M."/>
            <person name="Daines R.A."/>
            <person name="Lonsdale J.T."/>
        </authorList>
    </citation>
    <scope>INHIBITION BY ANTIBIOTICS</scope>
</reference>
<name>FABH_HAEIN</name>
<proteinExistence type="evidence at protein level"/>
<sequence>MNSRILSTGSYLPSHIRTNADLEKMVDTSDEWIVTRSGIRERRIAAEDETVATMGFEAAKNAIEAAQINPQDIELIIVATTSHSHAYPSAACQVQGLLNIDDAISFDLAAACTGFVYALSVADQFIRAGKVKKALVIGSDLNSRKLDETDRSTVVLFGDGAGAVILEASEQEGIISTHLHASADKNNALVLAQPERGIEKSGYIEMQGNETFKLAVRELSNVVEETLLANNLDKKDLDWLVPHQANLRIITATAKKLEMDMSQVVVTLDKYANNSAATVPVALDEAIRDGRIQRGQLLLLEAFGGGWTWGSALVRF</sequence>
<accession>P43711</accession>
<feature type="chain" id="PRO_0000110432" description="Beta-ketoacyl-[acyl-carrier-protein] synthase III">
    <location>
        <begin position="1"/>
        <end position="316"/>
    </location>
</feature>
<feature type="region of interest" description="ACP-binding" evidence="1">
    <location>
        <begin position="244"/>
        <end position="248"/>
    </location>
</feature>
<feature type="active site" evidence="1">
    <location>
        <position position="112"/>
    </location>
</feature>
<feature type="active site" evidence="1">
    <location>
        <position position="243"/>
    </location>
</feature>
<feature type="active site" evidence="1">
    <location>
        <position position="273"/>
    </location>
</feature>
<feature type="strand" evidence="5">
    <location>
        <begin position="7"/>
        <end position="11"/>
    </location>
</feature>
<feature type="strand" evidence="5">
    <location>
        <begin position="16"/>
        <end position="18"/>
    </location>
</feature>
<feature type="helix" evidence="5">
    <location>
        <begin position="19"/>
        <end position="23"/>
    </location>
</feature>
<feature type="helix" evidence="5">
    <location>
        <begin position="30"/>
        <end position="36"/>
    </location>
</feature>
<feature type="strand" evidence="5">
    <location>
        <begin position="41"/>
        <end position="43"/>
    </location>
</feature>
<feature type="helix" evidence="5">
    <location>
        <begin position="51"/>
        <end position="66"/>
    </location>
</feature>
<feature type="helix" evidence="5">
    <location>
        <begin position="70"/>
        <end position="72"/>
    </location>
</feature>
<feature type="strand" evidence="5">
    <location>
        <begin position="75"/>
        <end position="79"/>
    </location>
</feature>
<feature type="strand" evidence="5">
    <location>
        <begin position="86"/>
        <end position="88"/>
    </location>
</feature>
<feature type="helix" evidence="5">
    <location>
        <begin position="90"/>
        <end position="97"/>
    </location>
</feature>
<feature type="strand" evidence="5">
    <location>
        <begin position="104"/>
        <end position="108"/>
    </location>
</feature>
<feature type="helix" evidence="5">
    <location>
        <begin position="111"/>
        <end position="113"/>
    </location>
</feature>
<feature type="helix" evidence="5">
    <location>
        <begin position="114"/>
        <end position="127"/>
    </location>
</feature>
<feature type="strand" evidence="5">
    <location>
        <begin position="132"/>
        <end position="141"/>
    </location>
</feature>
<feature type="helix" evidence="5">
    <location>
        <begin position="142"/>
        <end position="144"/>
    </location>
</feature>
<feature type="turn" evidence="5">
    <location>
        <begin position="151"/>
        <end position="156"/>
    </location>
</feature>
<feature type="strand" evidence="5">
    <location>
        <begin position="159"/>
        <end position="171"/>
    </location>
</feature>
<feature type="strand" evidence="5">
    <location>
        <begin position="174"/>
        <end position="181"/>
    </location>
</feature>
<feature type="strand" evidence="5">
    <location>
        <begin position="188"/>
        <end position="190"/>
    </location>
</feature>
<feature type="helix" evidence="5">
    <location>
        <begin position="208"/>
        <end position="228"/>
    </location>
</feature>
<feature type="turn" evidence="5">
    <location>
        <begin position="229"/>
        <end position="231"/>
    </location>
</feature>
<feature type="turn" evidence="5">
    <location>
        <begin position="234"/>
        <end position="236"/>
    </location>
</feature>
<feature type="strand" evidence="5">
    <location>
        <begin position="239"/>
        <end position="242"/>
    </location>
</feature>
<feature type="helix" evidence="5">
    <location>
        <begin position="247"/>
        <end position="256"/>
    </location>
</feature>
<feature type="helix" evidence="5">
    <location>
        <begin position="261"/>
        <end position="263"/>
    </location>
</feature>
<feature type="helix" evidence="5">
    <location>
        <begin position="268"/>
        <end position="271"/>
    </location>
</feature>
<feature type="helix" evidence="5">
    <location>
        <begin position="275"/>
        <end position="277"/>
    </location>
</feature>
<feature type="helix" evidence="5">
    <location>
        <begin position="278"/>
        <end position="288"/>
    </location>
</feature>
<feature type="strand" evidence="5">
    <location>
        <begin position="297"/>
        <end position="304"/>
    </location>
</feature>
<feature type="turn" evidence="5">
    <location>
        <begin position="305"/>
        <end position="307"/>
    </location>
</feature>
<feature type="strand" evidence="5">
    <location>
        <begin position="308"/>
        <end position="315"/>
    </location>
</feature>
<gene>
    <name evidence="1" type="primary">fabH</name>
    <name type="ordered locus">HI_0157</name>
</gene>
<organism>
    <name type="scientific">Haemophilus influenzae (strain ATCC 51907 / DSM 11121 / KW20 / Rd)</name>
    <dbReference type="NCBI Taxonomy" id="71421"/>
    <lineage>
        <taxon>Bacteria</taxon>
        <taxon>Pseudomonadati</taxon>
        <taxon>Pseudomonadota</taxon>
        <taxon>Gammaproteobacteria</taxon>
        <taxon>Pasteurellales</taxon>
        <taxon>Pasteurellaceae</taxon>
        <taxon>Haemophilus</taxon>
    </lineage>
</organism>
<comment type="function">
    <text evidence="1">Catalyzes the condensation reaction of fatty acid synthesis by the addition to an acyl acceptor of two carbons from malonyl-ACP. Catalyzes the first condensation reaction which initiates fatty acid synthesis and may therefore play a role in governing the total rate of fatty acid production. Possesses both acetoacetyl-ACP synthase and acetyl transacylase activities. Its substrate specificity determines the biosynthesis of branched-chain and/or straight-chain of fatty acids.</text>
</comment>
<comment type="catalytic activity">
    <reaction evidence="1">
        <text>malonyl-[ACP] + acetyl-CoA + H(+) = 3-oxobutanoyl-[ACP] + CO2 + CoA</text>
        <dbReference type="Rhea" id="RHEA:12080"/>
        <dbReference type="Rhea" id="RHEA-COMP:9623"/>
        <dbReference type="Rhea" id="RHEA-COMP:9625"/>
        <dbReference type="ChEBI" id="CHEBI:15378"/>
        <dbReference type="ChEBI" id="CHEBI:16526"/>
        <dbReference type="ChEBI" id="CHEBI:57287"/>
        <dbReference type="ChEBI" id="CHEBI:57288"/>
        <dbReference type="ChEBI" id="CHEBI:78449"/>
        <dbReference type="ChEBI" id="CHEBI:78450"/>
        <dbReference type="EC" id="2.3.1.180"/>
    </reaction>
</comment>
<comment type="activity regulation">
    <text evidence="2">Inhibited by the SB418011 antibiotic (PubMed:11375394). Not inhibited by cerulenin, and weakly inhibited by thiolactomycin (PubMed:11375394).</text>
</comment>
<comment type="pathway">
    <text evidence="1">Lipid metabolism; fatty acid biosynthesis.</text>
</comment>
<comment type="subunit">
    <text evidence="1">Homodimer.</text>
</comment>
<comment type="subcellular location">
    <subcellularLocation>
        <location evidence="4">Cytoplasm</location>
    </subcellularLocation>
</comment>
<comment type="domain">
    <text evidence="1">The last Arg residue of the ACP-binding site is essential for the weak association between ACP/AcpP and FabH.</text>
</comment>
<comment type="similarity">
    <text evidence="1">Belongs to the thiolase-like superfamily. FabH family.</text>
</comment>
<dbReference type="EC" id="2.3.1.180" evidence="1"/>
<dbReference type="EMBL" id="L42023">
    <property type="protein sequence ID" value="AAC21826.1"/>
    <property type="molecule type" value="Genomic_DNA"/>
</dbReference>
<dbReference type="PIR" id="F64051">
    <property type="entry name" value="F64051"/>
</dbReference>
<dbReference type="RefSeq" id="NP_438327.1">
    <property type="nucleotide sequence ID" value="NC_000907.1"/>
</dbReference>
<dbReference type="PDB" id="3IL3">
    <property type="method" value="X-ray"/>
    <property type="resolution" value="2.70 A"/>
    <property type="chains" value="A=1-316"/>
</dbReference>
<dbReference type="PDBsum" id="3IL3"/>
<dbReference type="SMR" id="P43711"/>
<dbReference type="STRING" id="71421.HI_0157"/>
<dbReference type="BindingDB" id="P43711"/>
<dbReference type="ChEMBL" id="CHEMBL3822"/>
<dbReference type="EnsemblBacteria" id="AAC21826">
    <property type="protein sequence ID" value="AAC21826"/>
    <property type="gene ID" value="HI_0157"/>
</dbReference>
<dbReference type="KEGG" id="hin:HI_0157"/>
<dbReference type="PATRIC" id="fig|71421.8.peg.162"/>
<dbReference type="eggNOG" id="COG0332">
    <property type="taxonomic scope" value="Bacteria"/>
</dbReference>
<dbReference type="HOGENOM" id="CLU_039592_3_1_6"/>
<dbReference type="OrthoDB" id="9815506at2"/>
<dbReference type="PhylomeDB" id="P43711"/>
<dbReference type="BioCyc" id="HINF71421:G1GJ1-169-MONOMER"/>
<dbReference type="BRENDA" id="2.3.1.180">
    <property type="organism ID" value="2529"/>
</dbReference>
<dbReference type="UniPathway" id="UPA00094"/>
<dbReference type="EvolutionaryTrace" id="P43711"/>
<dbReference type="Proteomes" id="UP000000579">
    <property type="component" value="Chromosome"/>
</dbReference>
<dbReference type="GO" id="GO:0005737">
    <property type="term" value="C:cytoplasm"/>
    <property type="evidence" value="ECO:0007669"/>
    <property type="project" value="UniProtKB-SubCell"/>
</dbReference>
<dbReference type="GO" id="GO:0004315">
    <property type="term" value="F:3-oxoacyl-[acyl-carrier-protein] synthase activity"/>
    <property type="evidence" value="ECO:0007669"/>
    <property type="project" value="InterPro"/>
</dbReference>
<dbReference type="GO" id="GO:0033818">
    <property type="term" value="F:beta-ketoacyl-acyl-carrier-protein synthase III activity"/>
    <property type="evidence" value="ECO:0007669"/>
    <property type="project" value="UniProtKB-UniRule"/>
</dbReference>
<dbReference type="GO" id="GO:0006633">
    <property type="term" value="P:fatty acid biosynthetic process"/>
    <property type="evidence" value="ECO:0007669"/>
    <property type="project" value="UniProtKB-UniRule"/>
</dbReference>
<dbReference type="GO" id="GO:0044550">
    <property type="term" value="P:secondary metabolite biosynthetic process"/>
    <property type="evidence" value="ECO:0000318"/>
    <property type="project" value="GO_Central"/>
</dbReference>
<dbReference type="CDD" id="cd00830">
    <property type="entry name" value="KAS_III"/>
    <property type="match status" value="1"/>
</dbReference>
<dbReference type="FunFam" id="3.40.47.10:FF:000056">
    <property type="entry name" value="3-oxoacyl-[acyl-carrier-protein] synthase 3"/>
    <property type="match status" value="1"/>
</dbReference>
<dbReference type="FunFam" id="3.40.47.10:FF:000068">
    <property type="entry name" value="3-oxoacyl-[acyl-carrier-protein] synthase 3"/>
    <property type="match status" value="1"/>
</dbReference>
<dbReference type="Gene3D" id="3.40.47.10">
    <property type="match status" value="2"/>
</dbReference>
<dbReference type="HAMAP" id="MF_01815">
    <property type="entry name" value="FabH"/>
    <property type="match status" value="1"/>
</dbReference>
<dbReference type="InterPro" id="IPR013747">
    <property type="entry name" value="ACP_syn_III_C"/>
</dbReference>
<dbReference type="InterPro" id="IPR013751">
    <property type="entry name" value="ACP_syn_III_N"/>
</dbReference>
<dbReference type="InterPro" id="IPR004655">
    <property type="entry name" value="FabH"/>
</dbReference>
<dbReference type="InterPro" id="IPR016039">
    <property type="entry name" value="Thiolase-like"/>
</dbReference>
<dbReference type="NCBIfam" id="TIGR00747">
    <property type="entry name" value="fabH"/>
    <property type="match status" value="1"/>
</dbReference>
<dbReference type="NCBIfam" id="NF006829">
    <property type="entry name" value="PRK09352.1"/>
    <property type="match status" value="1"/>
</dbReference>
<dbReference type="PANTHER" id="PTHR34069">
    <property type="entry name" value="3-OXOACYL-[ACYL-CARRIER-PROTEIN] SYNTHASE 3"/>
    <property type="match status" value="1"/>
</dbReference>
<dbReference type="PANTHER" id="PTHR34069:SF2">
    <property type="entry name" value="BETA-KETOACYL-[ACYL-CARRIER-PROTEIN] SYNTHASE III"/>
    <property type="match status" value="1"/>
</dbReference>
<dbReference type="Pfam" id="PF08545">
    <property type="entry name" value="ACP_syn_III"/>
    <property type="match status" value="1"/>
</dbReference>
<dbReference type="Pfam" id="PF08541">
    <property type="entry name" value="ACP_syn_III_C"/>
    <property type="match status" value="1"/>
</dbReference>
<dbReference type="SUPFAM" id="SSF53901">
    <property type="entry name" value="Thiolase-like"/>
    <property type="match status" value="1"/>
</dbReference>